<keyword id="KW-0687">Ribonucleoprotein</keyword>
<keyword id="KW-0689">Ribosomal protein</keyword>
<protein>
    <recommendedName>
        <fullName evidence="1">Large ribosomal subunit protein bL28</fullName>
    </recommendedName>
    <alternativeName>
        <fullName evidence="2">50S ribosomal protein L28</fullName>
    </alternativeName>
</protein>
<comment type="similarity">
    <text evidence="1">Belongs to the bacterial ribosomal protein bL28 family.</text>
</comment>
<proteinExistence type="inferred from homology"/>
<sequence length="78" mass="8909">MSRACELTGAKANNGMAVSHSHIRTKKLQQVNLQKRRLWWEEGKKWVNIKISTKALKSIQKVGLDKFAKSNGVDLKKF</sequence>
<organism>
    <name type="scientific">Prochlorococcus marinus (strain AS9601)</name>
    <dbReference type="NCBI Taxonomy" id="146891"/>
    <lineage>
        <taxon>Bacteria</taxon>
        <taxon>Bacillati</taxon>
        <taxon>Cyanobacteriota</taxon>
        <taxon>Cyanophyceae</taxon>
        <taxon>Synechococcales</taxon>
        <taxon>Prochlorococcaceae</taxon>
        <taxon>Prochlorococcus</taxon>
    </lineage>
</organism>
<name>RL28_PROMS</name>
<accession>A2BR32</accession>
<feature type="chain" id="PRO_1000007307" description="Large ribosomal subunit protein bL28">
    <location>
        <begin position="1"/>
        <end position="78"/>
    </location>
</feature>
<dbReference type="EMBL" id="CP000551">
    <property type="protein sequence ID" value="ABM70243.1"/>
    <property type="molecule type" value="Genomic_DNA"/>
</dbReference>
<dbReference type="RefSeq" id="WP_011818398.1">
    <property type="nucleotide sequence ID" value="NC_008816.1"/>
</dbReference>
<dbReference type="SMR" id="A2BR32"/>
<dbReference type="STRING" id="146891.A9601_09591"/>
<dbReference type="KEGG" id="pmb:A9601_09591"/>
<dbReference type="eggNOG" id="COG0227">
    <property type="taxonomic scope" value="Bacteria"/>
</dbReference>
<dbReference type="HOGENOM" id="CLU_064548_3_0_3"/>
<dbReference type="OrthoDB" id="9805609at2"/>
<dbReference type="Proteomes" id="UP000002590">
    <property type="component" value="Chromosome"/>
</dbReference>
<dbReference type="GO" id="GO:1990904">
    <property type="term" value="C:ribonucleoprotein complex"/>
    <property type="evidence" value="ECO:0007669"/>
    <property type="project" value="UniProtKB-KW"/>
</dbReference>
<dbReference type="GO" id="GO:0005840">
    <property type="term" value="C:ribosome"/>
    <property type="evidence" value="ECO:0007669"/>
    <property type="project" value="UniProtKB-KW"/>
</dbReference>
<dbReference type="GO" id="GO:0003735">
    <property type="term" value="F:structural constituent of ribosome"/>
    <property type="evidence" value="ECO:0007669"/>
    <property type="project" value="InterPro"/>
</dbReference>
<dbReference type="GO" id="GO:0006412">
    <property type="term" value="P:translation"/>
    <property type="evidence" value="ECO:0007669"/>
    <property type="project" value="UniProtKB-UniRule"/>
</dbReference>
<dbReference type="Gene3D" id="2.30.170.40">
    <property type="entry name" value="Ribosomal protein L28/L24"/>
    <property type="match status" value="1"/>
</dbReference>
<dbReference type="HAMAP" id="MF_00373">
    <property type="entry name" value="Ribosomal_bL28"/>
    <property type="match status" value="1"/>
</dbReference>
<dbReference type="InterPro" id="IPR026569">
    <property type="entry name" value="Ribosomal_bL28"/>
</dbReference>
<dbReference type="InterPro" id="IPR034704">
    <property type="entry name" value="Ribosomal_bL28/bL31-like_sf"/>
</dbReference>
<dbReference type="InterPro" id="IPR001383">
    <property type="entry name" value="Ribosomal_bL28_bact-type"/>
</dbReference>
<dbReference type="InterPro" id="IPR037147">
    <property type="entry name" value="Ribosomal_bL28_sf"/>
</dbReference>
<dbReference type="NCBIfam" id="TIGR00009">
    <property type="entry name" value="L28"/>
    <property type="match status" value="1"/>
</dbReference>
<dbReference type="PANTHER" id="PTHR13528">
    <property type="entry name" value="39S RIBOSOMAL PROTEIN L28, MITOCHONDRIAL"/>
    <property type="match status" value="1"/>
</dbReference>
<dbReference type="PANTHER" id="PTHR13528:SF2">
    <property type="entry name" value="LARGE RIBOSOMAL SUBUNIT PROTEIN BL28M"/>
    <property type="match status" value="1"/>
</dbReference>
<dbReference type="Pfam" id="PF00830">
    <property type="entry name" value="Ribosomal_L28"/>
    <property type="match status" value="1"/>
</dbReference>
<dbReference type="SUPFAM" id="SSF143800">
    <property type="entry name" value="L28p-like"/>
    <property type="match status" value="1"/>
</dbReference>
<evidence type="ECO:0000255" key="1">
    <source>
        <dbReference type="HAMAP-Rule" id="MF_00373"/>
    </source>
</evidence>
<evidence type="ECO:0000305" key="2"/>
<reference key="1">
    <citation type="journal article" date="2007" name="PLoS Genet.">
        <title>Patterns and implications of gene gain and loss in the evolution of Prochlorococcus.</title>
        <authorList>
            <person name="Kettler G.C."/>
            <person name="Martiny A.C."/>
            <person name="Huang K."/>
            <person name="Zucker J."/>
            <person name="Coleman M.L."/>
            <person name="Rodrigue S."/>
            <person name="Chen F."/>
            <person name="Lapidus A."/>
            <person name="Ferriera S."/>
            <person name="Johnson J."/>
            <person name="Steglich C."/>
            <person name="Church G.M."/>
            <person name="Richardson P."/>
            <person name="Chisholm S.W."/>
        </authorList>
    </citation>
    <scope>NUCLEOTIDE SEQUENCE [LARGE SCALE GENOMIC DNA]</scope>
    <source>
        <strain>AS9601</strain>
    </source>
</reference>
<gene>
    <name evidence="1" type="primary">rpmB</name>
    <name evidence="1" type="synonym">rpl28</name>
    <name type="ordered locus">A9601_09591</name>
</gene>